<reference key="1">
    <citation type="journal article" date="2006" name="Theor. Appl. Genet.">
        <title>Complete chloroplast genome sequences of Solanum bulbocastanum, Solanum lycopersicum and comparative analyses with other Solanaceae genomes.</title>
        <authorList>
            <person name="Daniell H."/>
            <person name="Lee S.-B."/>
            <person name="Grevich J."/>
            <person name="Saski C."/>
            <person name="Quesada-Vargas T."/>
            <person name="Guda C."/>
            <person name="Tomkins J."/>
            <person name="Jansen R.K."/>
        </authorList>
    </citation>
    <scope>NUCLEOTIDE SEQUENCE [LARGE SCALE GENOMIC DNA]</scope>
    <source>
        <strain>cv. PT29</strain>
    </source>
</reference>
<feature type="chain" id="PRO_0000262629" description="Protein TIC 214">
    <location>
        <begin position="1"/>
        <end position="1887"/>
    </location>
</feature>
<feature type="transmembrane region" description="Helical" evidence="2">
    <location>
        <begin position="18"/>
        <end position="38"/>
    </location>
</feature>
<feature type="transmembrane region" description="Helical" evidence="2">
    <location>
        <begin position="64"/>
        <end position="84"/>
    </location>
</feature>
<feature type="transmembrane region" description="Helical" evidence="2">
    <location>
        <begin position="87"/>
        <end position="107"/>
    </location>
</feature>
<feature type="transmembrane region" description="Helical" evidence="2">
    <location>
        <begin position="124"/>
        <end position="144"/>
    </location>
</feature>
<feature type="transmembrane region" description="Helical" evidence="2">
    <location>
        <begin position="172"/>
        <end position="192"/>
    </location>
</feature>
<feature type="transmembrane region" description="Helical" evidence="2">
    <location>
        <begin position="221"/>
        <end position="241"/>
    </location>
</feature>
<feature type="region of interest" description="Disordered" evidence="3">
    <location>
        <begin position="248"/>
        <end position="300"/>
    </location>
</feature>
<feature type="region of interest" description="Disordered" evidence="3">
    <location>
        <begin position="786"/>
        <end position="805"/>
    </location>
</feature>
<feature type="region of interest" description="Disordered" evidence="3">
    <location>
        <begin position="1569"/>
        <end position="1603"/>
    </location>
</feature>
<feature type="coiled-coil region" evidence="2">
    <location>
        <begin position="775"/>
        <end position="816"/>
    </location>
</feature>
<feature type="compositionally biased region" description="Acidic residues" evidence="3">
    <location>
        <begin position="256"/>
        <end position="268"/>
    </location>
</feature>
<feature type="compositionally biased region" description="Basic and acidic residues" evidence="3">
    <location>
        <begin position="1578"/>
        <end position="1597"/>
    </location>
</feature>
<comment type="function">
    <text evidence="1">Involved in protein precursor import into chloroplasts. May be part of an intermediate translocation complex acting as a protein-conducting channel at the inner envelope.</text>
</comment>
<comment type="subunit">
    <text evidence="1">Part of the Tic complex.</text>
</comment>
<comment type="subcellular location">
    <subcellularLocation>
        <location evidence="1">Plastid</location>
        <location evidence="1">Chloroplast inner membrane</location>
        <topology evidence="2">Multi-pass membrane protein</topology>
    </subcellularLocation>
</comment>
<comment type="similarity">
    <text evidence="4">Belongs to the TIC214 family.</text>
</comment>
<evidence type="ECO:0000250" key="1">
    <source>
        <dbReference type="UniProtKB" id="P56785"/>
    </source>
</evidence>
<evidence type="ECO:0000255" key="2"/>
<evidence type="ECO:0000256" key="3">
    <source>
        <dbReference type="SAM" id="MobiDB-lite"/>
    </source>
</evidence>
<evidence type="ECO:0000305" key="4"/>
<name>TI214_SOLBU</name>
<organism>
    <name type="scientific">Solanum bulbocastanum</name>
    <name type="common">Wild potato</name>
    <dbReference type="NCBI Taxonomy" id="147425"/>
    <lineage>
        <taxon>Eukaryota</taxon>
        <taxon>Viridiplantae</taxon>
        <taxon>Streptophyta</taxon>
        <taxon>Embryophyta</taxon>
        <taxon>Tracheophyta</taxon>
        <taxon>Spermatophyta</taxon>
        <taxon>Magnoliopsida</taxon>
        <taxon>eudicotyledons</taxon>
        <taxon>Gunneridae</taxon>
        <taxon>Pentapetalae</taxon>
        <taxon>asterids</taxon>
        <taxon>lamiids</taxon>
        <taxon>Solanales</taxon>
        <taxon>Solanaceae</taxon>
        <taxon>Solanoideae</taxon>
        <taxon>Solaneae</taxon>
        <taxon>Solanum</taxon>
    </lineage>
</organism>
<sequence length="1887" mass="225063">MIFQSFLLGNLVSLCMKIINSVVVVGLYYGFLTTFSIGPSYLFLLRALVMEEGTEKKVSATTGFITGQLMMFISIYYAPLHLALGRPHTITVLALPYLLFHFFWNNHKHFFDYGSTTRNSMRNLSIQCVFLNNLIFQLFNHFILPSSMLARLVNIYLFRCNNKILFVTSGFVGWLIGHILFMKWLGLVLVWIRQNHSIRSNKYIRSNKYLVLELRNSMARIFSILLFITCVYYLGRIPSPILTKKLKEASKTEERVESEEERDVEIETASEMKGTKQEQEGSTEEDPYPSPSLFSEEGWDPDKIDETEEIRVNGKDKIKDKFHSHLTETGYNNINTSNSPIYDYQDSYLNNNNTGNLENFKLQLLDKKNENQDLFWFQKPLVSLLFDYNRWNRPFRYIKNNRFEQAVRTEMSQYFFDTCKSDGKQRISFTYPPSLSTFWKMIKRKIPLLSLQKTLPNKLDTQWVSTNKEKSNNLNKEFLNRLEILDKESLSMDILETRTRLCNDDTKKEYVPKMYDPLLNGPYRGTIKKGVSSSIINNTLLENWEKRVRLNRIHTIFLPNIDYQEFEQKAYTIDKKPLSTEIDEFLTLINELGNEPKSSLNVKGLSLFSDQEQRRAKSENRTKFVKFVFNAIDPNEPKSGKKSIGIKEISKKVPRWSHKLITELDQQMGEFQDRASIDHQLRSRKAKRVVIFTDNNATNDPEEEVALISYSQQSDFRRGIIKGSMRAQRRKTFISKLFQANVHSPLFVDRITPLRLFSFDISELIKPIFRNWTGKEREFKILESREEQTKREEKKEKDKKEDNKRKEQARIAIEEAWDNIPFAQIIRGYMLITQSILRKYILLPSLIIAKNLGRMLFLQLPEWSEDLQEWNREMQIKCTYNGVQLSETEFPKDWLRDGIQIKILFPFCLKPWHISKLYPSRGELMKKKKQKDDFCFLTVWGMEAELPFGSPRKRPSFFEPIFKELEKKIGKFKKKYFLTLKILKGKTKLFRSVSKETKKWFIQSIGFLKKIKKELSKVNPIVLFRFKEISESNETKKEKDYLISNQIINESFSQIESGNWPNSSLIEKKMKDLTDRTSTIKNQIERITKEKKKVTPEIDINPNKTNNIKKLESPKKFFQILKSRNTRVIWKFHYFLKLFIQRLYIDLFLSIINIPRITTQLFLESTNKLIEKFISNNEINQEKITNKKKIHFIFISTIKKSLYNISKKNSHIFCDLSYLSQAYVFYKLSQTQVINLSKFRSVLQYNTTSCFLKTKIKDYFKKLGIFHSELKHKKLQSYRINQWKNWLRWHYQYDLSQIRWSRLMPKKWRTRVNQSCMAQNKNRNLNKWNSYEKDQLIHYKKENDSELYSLSNQKDNFKKCYRYGLLAYKSINYENKSDSFFSRLPFQVKKNLEISYNSNTSKHNFVDMPVNLHINNYLRKVNILDIERNLDRKYFDWKIIHFSLRQKGDIEAWVKIDTNSNPNTKIGINNYQIIDKIEKKGVFYLTTHQNPEKTQKNSKKVFFDWMGMNEKIFNRPILNLEFWFFPEFVLLYNVYKIKPWIIPSKFLLFNLNTNENVIQNKNQKQNFFLPSNKKIKNRSQETKEPPSQRERGSDIENKGNLSPVFSKHQTDLEKDYVESDTKKGQNKKQYKSNTEAELDLFLKRYLLFQLRWNDALNQRMLENIKVYCLLLRLINPTKITISSIQRREMSLDIMLIQANLPLTDLMKKGVLIIEPIRLSVKHNGQFIMYQTIGISLVHKSKHQTNQRYREQRYVDKKNFDEFILQPQTQRINTEKTHFDLLVPENILWSRRRRELRIRSFFNSLNWNVVDRNSVFCNETNVKNWSQFLGERKPLYKDKNELIKFKFFLWPNYRLEDLACMNRYWFDTNNGSRFSILRIHMYPRLKIN</sequence>
<accession>Q2MIC9</accession>
<gene>
    <name evidence="1" type="primary">TIC214</name>
    <name type="synonym">ycf1</name>
</gene>
<geneLocation type="chloroplast"/>
<protein>
    <recommendedName>
        <fullName evidence="1">Protein TIC 214</fullName>
    </recommendedName>
    <alternativeName>
        <fullName evidence="1">Translocon at the inner envelope membrane of chloroplasts 214</fullName>
        <shortName evidence="1">AtTIC214</shortName>
    </alternativeName>
</protein>
<dbReference type="EMBL" id="DQ347958">
    <property type="protein sequence ID" value="ABC56272.1"/>
    <property type="molecule type" value="Genomic_DNA"/>
</dbReference>
<dbReference type="RefSeq" id="YP_538908.1">
    <property type="nucleotide sequence ID" value="NC_007943.1"/>
</dbReference>
<dbReference type="GeneID" id="3989472"/>
<dbReference type="GO" id="GO:0009706">
    <property type="term" value="C:chloroplast inner membrane"/>
    <property type="evidence" value="ECO:0007669"/>
    <property type="project" value="UniProtKB-SubCell"/>
</dbReference>
<dbReference type="GO" id="GO:0015031">
    <property type="term" value="P:protein transport"/>
    <property type="evidence" value="ECO:0007669"/>
    <property type="project" value="UniProtKB-KW"/>
</dbReference>
<dbReference type="InterPro" id="IPR008896">
    <property type="entry name" value="TIC214"/>
</dbReference>
<dbReference type="PANTHER" id="PTHR33163">
    <property type="entry name" value="PROTEIN TIC 214-RELATED"/>
    <property type="match status" value="1"/>
</dbReference>
<dbReference type="PANTHER" id="PTHR33163:SF47">
    <property type="entry name" value="TRANSLOCON AT THE INNER ENVELOPE MEMBRANE OF CHLOROPLASTS 214"/>
    <property type="match status" value="1"/>
</dbReference>
<dbReference type="Pfam" id="PF05758">
    <property type="entry name" value="Ycf1"/>
    <property type="match status" value="1"/>
</dbReference>
<keyword id="KW-0150">Chloroplast</keyword>
<keyword id="KW-0175">Coiled coil</keyword>
<keyword id="KW-0472">Membrane</keyword>
<keyword id="KW-0934">Plastid</keyword>
<keyword id="KW-1001">Plastid inner membrane</keyword>
<keyword id="KW-0653">Protein transport</keyword>
<keyword id="KW-0812">Transmembrane</keyword>
<keyword id="KW-1133">Transmembrane helix</keyword>
<keyword id="KW-0813">Transport</keyword>
<proteinExistence type="inferred from homology"/>